<evidence type="ECO:0000250" key="1"/>
<evidence type="ECO:0000255" key="2">
    <source>
        <dbReference type="PROSITE-ProRule" id="PRU00156"/>
    </source>
</evidence>
<evidence type="ECO:0000269" key="3">
    <source>
    </source>
</evidence>
<evidence type="ECO:0000305" key="4"/>
<name>PPID_DICDI</name>
<dbReference type="EC" id="5.2.1.8"/>
<dbReference type="EMBL" id="AF121347">
    <property type="protein sequence ID" value="AAD50375.1"/>
    <property type="molecule type" value="mRNA"/>
</dbReference>
<dbReference type="EMBL" id="AAFI02000036">
    <property type="protein sequence ID" value="EAL67179.1"/>
    <property type="molecule type" value="Genomic_DNA"/>
</dbReference>
<dbReference type="RefSeq" id="XP_641160.1">
    <property type="nucleotide sequence ID" value="XM_636068.1"/>
</dbReference>
<dbReference type="SMR" id="Q9UA41"/>
<dbReference type="FunCoup" id="Q9UA41">
    <property type="interactions" value="88"/>
</dbReference>
<dbReference type="STRING" id="44689.Q9UA41"/>
<dbReference type="PaxDb" id="44689-DDB0215377"/>
<dbReference type="EnsemblProtists" id="EAL67179">
    <property type="protein sequence ID" value="EAL67179"/>
    <property type="gene ID" value="DDB_G0280401"/>
</dbReference>
<dbReference type="GeneID" id="8622540"/>
<dbReference type="KEGG" id="ddi:DDB_G0280401"/>
<dbReference type="dictyBase" id="DDB_G0280401">
    <property type="gene designation" value="cypD"/>
</dbReference>
<dbReference type="VEuPathDB" id="AmoebaDB:DDB_G0280401"/>
<dbReference type="eggNOG" id="KOG0865">
    <property type="taxonomic scope" value="Eukaryota"/>
</dbReference>
<dbReference type="HOGENOM" id="CLU_012062_4_2_1"/>
<dbReference type="InParanoid" id="Q9UA41"/>
<dbReference type="OMA" id="RICFELY"/>
<dbReference type="PhylomeDB" id="Q9UA41"/>
<dbReference type="PRO" id="PR:Q9UA41"/>
<dbReference type="Proteomes" id="UP000002195">
    <property type="component" value="Chromosome 3"/>
</dbReference>
<dbReference type="GO" id="GO:0005737">
    <property type="term" value="C:cytoplasm"/>
    <property type="evidence" value="ECO:0000318"/>
    <property type="project" value="GO_Central"/>
</dbReference>
<dbReference type="GO" id="GO:0043231">
    <property type="term" value="C:intracellular membrane-bounded organelle"/>
    <property type="evidence" value="ECO:0000318"/>
    <property type="project" value="GO_Central"/>
</dbReference>
<dbReference type="GO" id="GO:0005739">
    <property type="term" value="C:mitochondrion"/>
    <property type="evidence" value="ECO:0000314"/>
    <property type="project" value="dictyBase"/>
</dbReference>
<dbReference type="GO" id="GO:0016018">
    <property type="term" value="F:cyclosporin A binding"/>
    <property type="evidence" value="ECO:0000318"/>
    <property type="project" value="GO_Central"/>
</dbReference>
<dbReference type="GO" id="GO:0003755">
    <property type="term" value="F:peptidyl-prolyl cis-trans isomerase activity"/>
    <property type="evidence" value="ECO:0000318"/>
    <property type="project" value="GO_Central"/>
</dbReference>
<dbReference type="GO" id="GO:0006457">
    <property type="term" value="P:protein folding"/>
    <property type="evidence" value="ECO:0000318"/>
    <property type="project" value="GO_Central"/>
</dbReference>
<dbReference type="FunFam" id="2.40.100.10:FF:000022">
    <property type="entry name" value="Peptidyl-prolyl cis-trans isomerase CYP95"/>
    <property type="match status" value="1"/>
</dbReference>
<dbReference type="Gene3D" id="2.40.100.10">
    <property type="entry name" value="Cyclophilin-like"/>
    <property type="match status" value="1"/>
</dbReference>
<dbReference type="InterPro" id="IPR029000">
    <property type="entry name" value="Cyclophilin-like_dom_sf"/>
</dbReference>
<dbReference type="InterPro" id="IPR024936">
    <property type="entry name" value="Cyclophilin-type_PPIase"/>
</dbReference>
<dbReference type="InterPro" id="IPR020892">
    <property type="entry name" value="Cyclophilin-type_PPIase_CS"/>
</dbReference>
<dbReference type="InterPro" id="IPR002130">
    <property type="entry name" value="Cyclophilin-type_PPIase_dom"/>
</dbReference>
<dbReference type="PANTHER" id="PTHR11071">
    <property type="entry name" value="PEPTIDYL-PROLYL CIS-TRANS ISOMERASE"/>
    <property type="match status" value="1"/>
</dbReference>
<dbReference type="PANTHER" id="PTHR11071:SF571">
    <property type="entry name" value="PEPTIDYL-PROLYL CIS-TRANS ISOMERASE D, MITOCHONDRIAL"/>
    <property type="match status" value="1"/>
</dbReference>
<dbReference type="Pfam" id="PF00160">
    <property type="entry name" value="Pro_isomerase"/>
    <property type="match status" value="1"/>
</dbReference>
<dbReference type="PIRSF" id="PIRSF001467">
    <property type="entry name" value="Peptidylpro_ismrse"/>
    <property type="match status" value="1"/>
</dbReference>
<dbReference type="PRINTS" id="PR00153">
    <property type="entry name" value="CSAPPISMRASE"/>
</dbReference>
<dbReference type="SUPFAM" id="SSF50891">
    <property type="entry name" value="Cyclophilin-like"/>
    <property type="match status" value="1"/>
</dbReference>
<dbReference type="PROSITE" id="PS00170">
    <property type="entry name" value="CSA_PPIASE_1"/>
    <property type="match status" value="1"/>
</dbReference>
<dbReference type="PROSITE" id="PS50072">
    <property type="entry name" value="CSA_PPIASE_2"/>
    <property type="match status" value="1"/>
</dbReference>
<gene>
    <name type="primary">cypD</name>
    <name type="synonym">cyp3</name>
    <name type="ORF">DDB_G0280401</name>
</gene>
<organism>
    <name type="scientific">Dictyostelium discoideum</name>
    <name type="common">Social amoeba</name>
    <dbReference type="NCBI Taxonomy" id="44689"/>
    <lineage>
        <taxon>Eukaryota</taxon>
        <taxon>Amoebozoa</taxon>
        <taxon>Evosea</taxon>
        <taxon>Eumycetozoa</taxon>
        <taxon>Dictyostelia</taxon>
        <taxon>Dictyosteliales</taxon>
        <taxon>Dictyosteliaceae</taxon>
        <taxon>Dictyostelium</taxon>
    </lineage>
</organism>
<protein>
    <recommendedName>
        <fullName>Peptidyl-prolyl cis-trans isomerase D, mitochondrial</fullName>
        <shortName>PPIase D</shortName>
        <ecNumber>5.2.1.8</ecNumber>
    </recommendedName>
    <alternativeName>
        <fullName>Cyclophilin D</fullName>
    </alternativeName>
    <alternativeName>
        <fullName>Rotamase D</fullName>
    </alternativeName>
</protein>
<sequence>MTGIIRNKVFFQIKQGNTPLGRVVFELYNDIVPKTAENFRALCTGEKGIGKSGKPLHYKGSSFHRVIKNFMVQGGDFTHGTGIGGESIYGRTFNDENFLVKHKIGCLSMANAGKNTNGSQFFITTAETPHLNGGHTVFGEVVEGFDIVKKVENAETDRSDRPKAACVIEDCGQL</sequence>
<feature type="chain" id="PRO_0000365605" description="Peptidyl-prolyl cis-trans isomerase D, mitochondrial">
    <location>
        <begin position="1"/>
        <end position="174"/>
    </location>
</feature>
<feature type="domain" description="PPIase cyclophilin-type" evidence="2">
    <location>
        <begin position="10"/>
        <end position="173"/>
    </location>
</feature>
<proteinExistence type="evidence at protein level"/>
<accession>Q9UA41</accession>
<accession>Q54VE9</accession>
<reference key="1">
    <citation type="journal article" date="1999" name="Biochimie">
        <title>The multigene immunophilin family of Dictyostelium discoideum. Characterization of microsomal and mitochondrial cyclophilin isoforms.</title>
        <authorList>
            <person name="Tapparo A."/>
            <person name="Kieffer S."/>
            <person name="Cretin F."/>
            <person name="Satre M."/>
            <person name="Klein G."/>
        </authorList>
    </citation>
    <scope>NUCLEOTIDE SEQUENCE [MRNA]</scope>
    <scope>PROTEIN SEQUENCE OF 8-14</scope>
    <scope>SUBCELLULAR LOCATION</scope>
    <scope>DEVELOPMENTAL STAGE</scope>
    <source>
        <strain>AX2</strain>
    </source>
</reference>
<reference key="2">
    <citation type="journal article" date="2005" name="Nature">
        <title>The genome of the social amoeba Dictyostelium discoideum.</title>
        <authorList>
            <person name="Eichinger L."/>
            <person name="Pachebat J.A."/>
            <person name="Gloeckner G."/>
            <person name="Rajandream M.A."/>
            <person name="Sucgang R."/>
            <person name="Berriman M."/>
            <person name="Song J."/>
            <person name="Olsen R."/>
            <person name="Szafranski K."/>
            <person name="Xu Q."/>
            <person name="Tunggal B."/>
            <person name="Kummerfeld S."/>
            <person name="Madera M."/>
            <person name="Konfortov B.A."/>
            <person name="Rivero F."/>
            <person name="Bankier A.T."/>
            <person name="Lehmann R."/>
            <person name="Hamlin N."/>
            <person name="Davies R."/>
            <person name="Gaudet P."/>
            <person name="Fey P."/>
            <person name="Pilcher K."/>
            <person name="Chen G."/>
            <person name="Saunders D."/>
            <person name="Sodergren E.J."/>
            <person name="Davis P."/>
            <person name="Kerhornou A."/>
            <person name="Nie X."/>
            <person name="Hall N."/>
            <person name="Anjard C."/>
            <person name="Hemphill L."/>
            <person name="Bason N."/>
            <person name="Farbrother P."/>
            <person name="Desany B."/>
            <person name="Just E."/>
            <person name="Morio T."/>
            <person name="Rost R."/>
            <person name="Churcher C.M."/>
            <person name="Cooper J."/>
            <person name="Haydock S."/>
            <person name="van Driessche N."/>
            <person name="Cronin A."/>
            <person name="Goodhead I."/>
            <person name="Muzny D.M."/>
            <person name="Mourier T."/>
            <person name="Pain A."/>
            <person name="Lu M."/>
            <person name="Harper D."/>
            <person name="Lindsay R."/>
            <person name="Hauser H."/>
            <person name="James K.D."/>
            <person name="Quiles M."/>
            <person name="Madan Babu M."/>
            <person name="Saito T."/>
            <person name="Buchrieser C."/>
            <person name="Wardroper A."/>
            <person name="Felder M."/>
            <person name="Thangavelu M."/>
            <person name="Johnson D."/>
            <person name="Knights A."/>
            <person name="Loulseged H."/>
            <person name="Mungall K.L."/>
            <person name="Oliver K."/>
            <person name="Price C."/>
            <person name="Quail M.A."/>
            <person name="Urushihara H."/>
            <person name="Hernandez J."/>
            <person name="Rabbinowitsch E."/>
            <person name="Steffen D."/>
            <person name="Sanders M."/>
            <person name="Ma J."/>
            <person name="Kohara Y."/>
            <person name="Sharp S."/>
            <person name="Simmonds M.N."/>
            <person name="Spiegler S."/>
            <person name="Tivey A."/>
            <person name="Sugano S."/>
            <person name="White B."/>
            <person name="Walker D."/>
            <person name="Woodward J.R."/>
            <person name="Winckler T."/>
            <person name="Tanaka Y."/>
            <person name="Shaulsky G."/>
            <person name="Schleicher M."/>
            <person name="Weinstock G.M."/>
            <person name="Rosenthal A."/>
            <person name="Cox E.C."/>
            <person name="Chisholm R.L."/>
            <person name="Gibbs R.A."/>
            <person name="Loomis W.F."/>
            <person name="Platzer M."/>
            <person name="Kay R.R."/>
            <person name="Williams J.G."/>
            <person name="Dear P.H."/>
            <person name="Noegel A.A."/>
            <person name="Barrell B.G."/>
            <person name="Kuspa A."/>
        </authorList>
    </citation>
    <scope>NUCLEOTIDE SEQUENCE [LARGE SCALE GENOMIC DNA]</scope>
    <source>
        <strain>AX4</strain>
    </source>
</reference>
<comment type="function">
    <text evidence="1">PPIases accelerate the folding of proteins. It catalyzes the cis-trans isomerization of proline imidic peptide bonds in oligopeptides (By similarity).</text>
</comment>
<comment type="catalytic activity">
    <reaction>
        <text>[protein]-peptidylproline (omega=180) = [protein]-peptidylproline (omega=0)</text>
        <dbReference type="Rhea" id="RHEA:16237"/>
        <dbReference type="Rhea" id="RHEA-COMP:10747"/>
        <dbReference type="Rhea" id="RHEA-COMP:10748"/>
        <dbReference type="ChEBI" id="CHEBI:83833"/>
        <dbReference type="ChEBI" id="CHEBI:83834"/>
        <dbReference type="EC" id="5.2.1.8"/>
    </reaction>
</comment>
<comment type="activity regulation">
    <text>Binds cyclosporin A (CsA). CsA mediates some of its effects via an inhibitory action on PPIase.</text>
</comment>
<comment type="subcellular location">
    <subcellularLocation>
        <location evidence="3">Mitochondrion</location>
    </subcellularLocation>
</comment>
<comment type="developmental stage">
    <text evidence="3">Strongly expressed in vegetative cells, and a steady decrease during the differentiation cycle.</text>
</comment>
<comment type="similarity">
    <text evidence="4">Belongs to the cyclophilin-type PPIase family. PPIase D subfamily.</text>
</comment>
<keyword id="KW-0903">Direct protein sequencing</keyword>
<keyword id="KW-0413">Isomerase</keyword>
<keyword id="KW-0496">Mitochondrion</keyword>
<keyword id="KW-1185">Reference proteome</keyword>
<keyword id="KW-0697">Rotamase</keyword>